<name>ATPE_MYCVP</name>
<protein>
    <recommendedName>
        <fullName evidence="1">ATP synthase epsilon chain</fullName>
    </recommendedName>
    <alternativeName>
        <fullName evidence="1">ATP synthase F1 sector epsilon subunit</fullName>
    </alternativeName>
    <alternativeName>
        <fullName evidence="1">F-ATPase epsilon subunit</fullName>
    </alternativeName>
</protein>
<keyword id="KW-0066">ATP synthesis</keyword>
<keyword id="KW-1003">Cell membrane</keyword>
<keyword id="KW-0139">CF(1)</keyword>
<keyword id="KW-0375">Hydrogen ion transport</keyword>
<keyword id="KW-0406">Ion transport</keyword>
<keyword id="KW-0472">Membrane</keyword>
<keyword id="KW-0813">Transport</keyword>
<accession>A1TD54</accession>
<proteinExistence type="inferred from homology"/>
<evidence type="ECO:0000255" key="1">
    <source>
        <dbReference type="HAMAP-Rule" id="MF_00530"/>
    </source>
</evidence>
<comment type="function">
    <text evidence="1">Produces ATP from ADP in the presence of a proton gradient across the membrane.</text>
</comment>
<comment type="subunit">
    <text evidence="1">F-type ATPases have 2 components, CF(1) - the catalytic core - and CF(0) - the membrane proton channel. CF(1) has five subunits: alpha(3), beta(3), gamma(1), delta(1), epsilon(1). CF(0) has three main subunits: a, b and c.</text>
</comment>
<comment type="subcellular location">
    <subcellularLocation>
        <location evidence="1">Cell membrane</location>
        <topology evidence="1">Peripheral membrane protein</topology>
    </subcellularLocation>
</comment>
<comment type="similarity">
    <text evidence="1">Belongs to the ATPase epsilon chain family.</text>
</comment>
<gene>
    <name evidence="1" type="primary">atpC</name>
    <name type="ordered locus">Mvan_4327</name>
</gene>
<organism>
    <name type="scientific">Mycolicibacterium vanbaalenii (strain DSM 7251 / JCM 13017 / BCRC 16820 / KCTC 9966 / NRRL B-24157 / PYR-1)</name>
    <name type="common">Mycobacterium vanbaalenii</name>
    <dbReference type="NCBI Taxonomy" id="350058"/>
    <lineage>
        <taxon>Bacteria</taxon>
        <taxon>Bacillati</taxon>
        <taxon>Actinomycetota</taxon>
        <taxon>Actinomycetes</taxon>
        <taxon>Mycobacteriales</taxon>
        <taxon>Mycobacteriaceae</taxon>
        <taxon>Mycolicibacterium</taxon>
    </lineage>
</organism>
<sequence length="121" mass="13330">MAELHVEIVAVERELWSGDATFVFTRTTAGEIGILPRHIPLVAQLVDDAMVRVEREGEDDLRIAVDGGFLSVTEEAVRILVENAELESEIDADAAKQDSESDDERTAAWGRARLRALGQLD</sequence>
<reference key="1">
    <citation type="submission" date="2006-12" db="EMBL/GenBank/DDBJ databases">
        <title>Complete sequence of Mycobacterium vanbaalenii PYR-1.</title>
        <authorList>
            <consortium name="US DOE Joint Genome Institute"/>
            <person name="Copeland A."/>
            <person name="Lucas S."/>
            <person name="Lapidus A."/>
            <person name="Barry K."/>
            <person name="Detter J.C."/>
            <person name="Glavina del Rio T."/>
            <person name="Hammon N."/>
            <person name="Israni S."/>
            <person name="Dalin E."/>
            <person name="Tice H."/>
            <person name="Pitluck S."/>
            <person name="Singan V."/>
            <person name="Schmutz J."/>
            <person name="Larimer F."/>
            <person name="Land M."/>
            <person name="Hauser L."/>
            <person name="Kyrpides N."/>
            <person name="Anderson I.J."/>
            <person name="Miller C."/>
            <person name="Richardson P."/>
        </authorList>
    </citation>
    <scope>NUCLEOTIDE SEQUENCE [LARGE SCALE GENOMIC DNA]</scope>
    <source>
        <strain>DSM 7251 / JCM 13017 / BCRC 16820 / KCTC 9966 / NRRL B-24157 / PYR-1</strain>
    </source>
</reference>
<feature type="chain" id="PRO_1000056510" description="ATP synthase epsilon chain">
    <location>
        <begin position="1"/>
        <end position="121"/>
    </location>
</feature>
<dbReference type="EMBL" id="CP000511">
    <property type="protein sequence ID" value="ABM15104.1"/>
    <property type="molecule type" value="Genomic_DNA"/>
</dbReference>
<dbReference type="RefSeq" id="WP_011781482.1">
    <property type="nucleotide sequence ID" value="NZ_JACKSD010000061.1"/>
</dbReference>
<dbReference type="SMR" id="A1TD54"/>
<dbReference type="STRING" id="350058.Mvan_4327"/>
<dbReference type="KEGG" id="mva:Mvan_4327"/>
<dbReference type="eggNOG" id="COG0355">
    <property type="taxonomic scope" value="Bacteria"/>
</dbReference>
<dbReference type="HOGENOM" id="CLU_084338_4_0_11"/>
<dbReference type="Proteomes" id="UP000009159">
    <property type="component" value="Chromosome"/>
</dbReference>
<dbReference type="GO" id="GO:0005886">
    <property type="term" value="C:plasma membrane"/>
    <property type="evidence" value="ECO:0007669"/>
    <property type="project" value="UniProtKB-SubCell"/>
</dbReference>
<dbReference type="GO" id="GO:0045259">
    <property type="term" value="C:proton-transporting ATP synthase complex"/>
    <property type="evidence" value="ECO:0007669"/>
    <property type="project" value="UniProtKB-KW"/>
</dbReference>
<dbReference type="GO" id="GO:0005524">
    <property type="term" value="F:ATP binding"/>
    <property type="evidence" value="ECO:0007669"/>
    <property type="project" value="UniProtKB-UniRule"/>
</dbReference>
<dbReference type="GO" id="GO:0046933">
    <property type="term" value="F:proton-transporting ATP synthase activity, rotational mechanism"/>
    <property type="evidence" value="ECO:0007669"/>
    <property type="project" value="UniProtKB-UniRule"/>
</dbReference>
<dbReference type="CDD" id="cd12152">
    <property type="entry name" value="F1-ATPase_delta"/>
    <property type="match status" value="1"/>
</dbReference>
<dbReference type="Gene3D" id="2.60.15.10">
    <property type="entry name" value="F0F1 ATP synthase delta/epsilon subunit, N-terminal"/>
    <property type="match status" value="1"/>
</dbReference>
<dbReference type="HAMAP" id="MF_00530">
    <property type="entry name" value="ATP_synth_epsil_bac"/>
    <property type="match status" value="1"/>
</dbReference>
<dbReference type="InterPro" id="IPR001469">
    <property type="entry name" value="ATP_synth_F1_dsu/esu"/>
</dbReference>
<dbReference type="InterPro" id="IPR020546">
    <property type="entry name" value="ATP_synth_F1_dsu/esu_N"/>
</dbReference>
<dbReference type="InterPro" id="IPR036771">
    <property type="entry name" value="ATPsynth_dsu/esu_N"/>
</dbReference>
<dbReference type="NCBIfam" id="TIGR01216">
    <property type="entry name" value="ATP_synt_epsi"/>
    <property type="match status" value="1"/>
</dbReference>
<dbReference type="NCBIfam" id="NF009977">
    <property type="entry name" value="PRK13442.1"/>
    <property type="match status" value="1"/>
</dbReference>
<dbReference type="PANTHER" id="PTHR13822">
    <property type="entry name" value="ATP SYNTHASE DELTA/EPSILON CHAIN"/>
    <property type="match status" value="1"/>
</dbReference>
<dbReference type="PANTHER" id="PTHR13822:SF10">
    <property type="entry name" value="ATP SYNTHASE EPSILON CHAIN, CHLOROPLASTIC"/>
    <property type="match status" value="1"/>
</dbReference>
<dbReference type="Pfam" id="PF02823">
    <property type="entry name" value="ATP-synt_DE_N"/>
    <property type="match status" value="1"/>
</dbReference>
<dbReference type="SUPFAM" id="SSF51344">
    <property type="entry name" value="Epsilon subunit of F1F0-ATP synthase N-terminal domain"/>
    <property type="match status" value="1"/>
</dbReference>